<organism>
    <name type="scientific">Pseudoalteromonas atlantica (strain T6c / ATCC BAA-1087)</name>
    <dbReference type="NCBI Taxonomy" id="3042615"/>
    <lineage>
        <taxon>Bacteria</taxon>
        <taxon>Pseudomonadati</taxon>
        <taxon>Pseudomonadota</taxon>
        <taxon>Gammaproteobacteria</taxon>
        <taxon>Alteromonadales</taxon>
        <taxon>Alteromonadaceae</taxon>
        <taxon>Paraglaciecola</taxon>
    </lineage>
</organism>
<name>UPPP_PSEA6</name>
<reference key="1">
    <citation type="submission" date="2006-06" db="EMBL/GenBank/DDBJ databases">
        <title>Complete sequence of Pseudoalteromonas atlantica T6c.</title>
        <authorList>
            <consortium name="US DOE Joint Genome Institute"/>
            <person name="Copeland A."/>
            <person name="Lucas S."/>
            <person name="Lapidus A."/>
            <person name="Barry K."/>
            <person name="Detter J.C."/>
            <person name="Glavina del Rio T."/>
            <person name="Hammon N."/>
            <person name="Israni S."/>
            <person name="Dalin E."/>
            <person name="Tice H."/>
            <person name="Pitluck S."/>
            <person name="Saunders E."/>
            <person name="Brettin T."/>
            <person name="Bruce D."/>
            <person name="Han C."/>
            <person name="Tapia R."/>
            <person name="Gilna P."/>
            <person name="Schmutz J."/>
            <person name="Larimer F."/>
            <person name="Land M."/>
            <person name="Hauser L."/>
            <person name="Kyrpides N."/>
            <person name="Kim E."/>
            <person name="Karls A.C."/>
            <person name="Bartlett D."/>
            <person name="Higgins B.P."/>
            <person name="Richardson P."/>
        </authorList>
    </citation>
    <scope>NUCLEOTIDE SEQUENCE [LARGE SCALE GENOMIC DNA]</scope>
    <source>
        <strain>T6c / ATCC BAA-1087</strain>
    </source>
</reference>
<dbReference type="EC" id="3.6.1.27" evidence="1"/>
<dbReference type="EMBL" id="CP000388">
    <property type="protein sequence ID" value="ABG39572.1"/>
    <property type="molecule type" value="Genomic_DNA"/>
</dbReference>
<dbReference type="RefSeq" id="WP_011573912.1">
    <property type="nucleotide sequence ID" value="NC_008228.1"/>
</dbReference>
<dbReference type="SMR" id="Q15X16"/>
<dbReference type="STRING" id="342610.Patl_1046"/>
<dbReference type="KEGG" id="pat:Patl_1046"/>
<dbReference type="eggNOG" id="COG1968">
    <property type="taxonomic scope" value="Bacteria"/>
</dbReference>
<dbReference type="HOGENOM" id="CLU_060296_1_0_6"/>
<dbReference type="OrthoDB" id="9808289at2"/>
<dbReference type="Proteomes" id="UP000001981">
    <property type="component" value="Chromosome"/>
</dbReference>
<dbReference type="GO" id="GO:0005886">
    <property type="term" value="C:plasma membrane"/>
    <property type="evidence" value="ECO:0007669"/>
    <property type="project" value="UniProtKB-SubCell"/>
</dbReference>
<dbReference type="GO" id="GO:0050380">
    <property type="term" value="F:undecaprenyl-diphosphatase activity"/>
    <property type="evidence" value="ECO:0007669"/>
    <property type="project" value="UniProtKB-UniRule"/>
</dbReference>
<dbReference type="GO" id="GO:0071555">
    <property type="term" value="P:cell wall organization"/>
    <property type="evidence" value="ECO:0007669"/>
    <property type="project" value="UniProtKB-KW"/>
</dbReference>
<dbReference type="GO" id="GO:0009252">
    <property type="term" value="P:peptidoglycan biosynthetic process"/>
    <property type="evidence" value="ECO:0007669"/>
    <property type="project" value="UniProtKB-KW"/>
</dbReference>
<dbReference type="GO" id="GO:0008360">
    <property type="term" value="P:regulation of cell shape"/>
    <property type="evidence" value="ECO:0007669"/>
    <property type="project" value="UniProtKB-KW"/>
</dbReference>
<dbReference type="GO" id="GO:0046677">
    <property type="term" value="P:response to antibiotic"/>
    <property type="evidence" value="ECO:0007669"/>
    <property type="project" value="UniProtKB-UniRule"/>
</dbReference>
<dbReference type="HAMAP" id="MF_01006">
    <property type="entry name" value="Undec_diphosphatase"/>
    <property type="match status" value="1"/>
</dbReference>
<dbReference type="InterPro" id="IPR003824">
    <property type="entry name" value="UppP"/>
</dbReference>
<dbReference type="NCBIfam" id="NF001393">
    <property type="entry name" value="PRK00281.2-4"/>
    <property type="match status" value="1"/>
</dbReference>
<dbReference type="NCBIfam" id="TIGR00753">
    <property type="entry name" value="undec_PP_bacA"/>
    <property type="match status" value="1"/>
</dbReference>
<dbReference type="PANTHER" id="PTHR30622">
    <property type="entry name" value="UNDECAPRENYL-DIPHOSPHATASE"/>
    <property type="match status" value="1"/>
</dbReference>
<dbReference type="PANTHER" id="PTHR30622:SF4">
    <property type="entry name" value="UNDECAPRENYL-DIPHOSPHATASE"/>
    <property type="match status" value="1"/>
</dbReference>
<dbReference type="Pfam" id="PF02673">
    <property type="entry name" value="BacA"/>
    <property type="match status" value="1"/>
</dbReference>
<protein>
    <recommendedName>
        <fullName evidence="1">Undecaprenyl-diphosphatase</fullName>
        <ecNumber evidence="1">3.6.1.27</ecNumber>
    </recommendedName>
    <alternativeName>
        <fullName evidence="1">Bacitracin resistance protein</fullName>
    </alternativeName>
    <alternativeName>
        <fullName evidence="1">Undecaprenyl pyrophosphate phosphatase</fullName>
    </alternativeName>
</protein>
<feature type="chain" id="PRO_0000290750" description="Undecaprenyl-diphosphatase">
    <location>
        <begin position="1"/>
        <end position="266"/>
    </location>
</feature>
<feature type="transmembrane region" description="Helical" evidence="1">
    <location>
        <begin position="1"/>
        <end position="21"/>
    </location>
</feature>
<feature type="transmembrane region" description="Helical" evidence="1">
    <location>
        <begin position="39"/>
        <end position="59"/>
    </location>
</feature>
<feature type="transmembrane region" description="Helical" evidence="1">
    <location>
        <begin position="87"/>
        <end position="107"/>
    </location>
</feature>
<feature type="transmembrane region" description="Helical" evidence="1">
    <location>
        <begin position="111"/>
        <end position="131"/>
    </location>
</feature>
<feature type="transmembrane region" description="Helical" evidence="1">
    <location>
        <begin position="150"/>
        <end position="172"/>
    </location>
</feature>
<feature type="transmembrane region" description="Helical" evidence="1">
    <location>
        <begin position="187"/>
        <end position="207"/>
    </location>
</feature>
<feature type="transmembrane region" description="Helical" evidence="1">
    <location>
        <begin position="218"/>
        <end position="238"/>
    </location>
</feature>
<feature type="transmembrane region" description="Helical" evidence="1">
    <location>
        <begin position="244"/>
        <end position="264"/>
    </location>
</feature>
<sequence length="266" mass="28797">MTLTEIIILAIIQGITEFLPISSSAHLILPSVLLGWENQGLAFDVAVHVGSLLAVMIYFRGDIGRMLVAWFGSGFSKNQTDDSRLAWWVIIATIPALIFGFAGKAFIEEYARSALVIACTTIGFGLLLWYADKKAALNKHIYDMTWKSALIVGMAQALALIPGTSRSGITMTAGLMLGLDRESAARFSFLLSIPVILGAGLLATLDLVSAPDAVDWNALIVGAVLSFVSAYACIYLFLAWISRIGMLPFVIYRMLLGVILLLFVFA</sequence>
<accession>Q15X16</accession>
<comment type="function">
    <text evidence="1">Catalyzes the dephosphorylation of undecaprenyl diphosphate (UPP). Confers resistance to bacitracin.</text>
</comment>
<comment type="catalytic activity">
    <reaction evidence="1">
        <text>di-trans,octa-cis-undecaprenyl diphosphate + H2O = di-trans,octa-cis-undecaprenyl phosphate + phosphate + H(+)</text>
        <dbReference type="Rhea" id="RHEA:28094"/>
        <dbReference type="ChEBI" id="CHEBI:15377"/>
        <dbReference type="ChEBI" id="CHEBI:15378"/>
        <dbReference type="ChEBI" id="CHEBI:43474"/>
        <dbReference type="ChEBI" id="CHEBI:58405"/>
        <dbReference type="ChEBI" id="CHEBI:60392"/>
        <dbReference type="EC" id="3.6.1.27"/>
    </reaction>
</comment>
<comment type="subcellular location">
    <subcellularLocation>
        <location evidence="1">Cell inner membrane</location>
        <topology evidence="1">Multi-pass membrane protein</topology>
    </subcellularLocation>
</comment>
<comment type="miscellaneous">
    <text>Bacitracin is thought to be involved in the inhibition of peptidoglycan synthesis by sequestering undecaprenyl diphosphate, thereby reducing the pool of lipid carrier available.</text>
</comment>
<comment type="similarity">
    <text evidence="1">Belongs to the UppP family.</text>
</comment>
<evidence type="ECO:0000255" key="1">
    <source>
        <dbReference type="HAMAP-Rule" id="MF_01006"/>
    </source>
</evidence>
<keyword id="KW-0046">Antibiotic resistance</keyword>
<keyword id="KW-0997">Cell inner membrane</keyword>
<keyword id="KW-1003">Cell membrane</keyword>
<keyword id="KW-0133">Cell shape</keyword>
<keyword id="KW-0961">Cell wall biogenesis/degradation</keyword>
<keyword id="KW-0378">Hydrolase</keyword>
<keyword id="KW-0472">Membrane</keyword>
<keyword id="KW-0573">Peptidoglycan synthesis</keyword>
<keyword id="KW-0812">Transmembrane</keyword>
<keyword id="KW-1133">Transmembrane helix</keyword>
<gene>
    <name evidence="1" type="primary">uppP</name>
    <name type="ordered locus">Patl_1046</name>
</gene>
<proteinExistence type="inferred from homology"/>